<protein>
    <recommendedName>
        <fullName>Partner of bursicon</fullName>
    </recommendedName>
    <alternativeName>
        <fullName>Bursicon subunit beta</fullName>
    </alternativeName>
</protein>
<accession>Q566B2</accession>
<comment type="function">
    <text evidence="3">Final heterodimeric neurohormone released at the end of the molting cycle, involved in the sclerotization (tanning) of the insect cuticle, melanization and wing spreading.</text>
</comment>
<comment type="subunit">
    <text evidence="1">Heterodimer of burs and pburs.</text>
</comment>
<comment type="subcellular location">
    <subcellularLocation>
        <location evidence="1">Secreted</location>
    </subcellularLocation>
</comment>
<feature type="signal peptide" evidence="4">
    <location>
        <begin position="1"/>
        <end position="24"/>
    </location>
</feature>
<feature type="chain" id="PRO_0000223890" description="Partner of bursicon" evidence="4">
    <location>
        <begin position="25"/>
        <end position="137"/>
    </location>
</feature>
<feature type="domain" description="CTCK" evidence="4">
    <location>
        <begin position="28"/>
        <end position="123"/>
    </location>
</feature>
<feature type="disulfide bond" evidence="2">
    <location>
        <begin position="28"/>
        <end position="86"/>
    </location>
</feature>
<feature type="disulfide bond" evidence="2">
    <location>
        <begin position="52"/>
        <end position="101"/>
    </location>
</feature>
<feature type="disulfide bond" evidence="2">
    <location>
        <begin position="61"/>
        <end position="127"/>
    </location>
</feature>
<feature type="disulfide bond" evidence="2">
    <location>
        <begin position="65"/>
        <end position="129"/>
    </location>
</feature>
<feature type="disulfide bond" evidence="2">
    <location>
        <begin position="83"/>
        <end position="132"/>
    </location>
</feature>
<feature type="disulfide bond" description="Interchain" evidence="2">
    <location>
        <position position="85"/>
    </location>
</feature>
<name>PBURS_BOMMO</name>
<sequence>MNIMITKIFFLVQLFYIVVSKSSAEENCETVASEVHVTKEEYDEMGRLLRSCSGEVSVNKCEGMCNSQVHPSISSPTGFQKECFCCREKFLRERLVTLTHCYDPDGIRFEDEENALMEVRLREPDECECYKCGDFSR</sequence>
<keyword id="KW-1015">Disulfide bond</keyword>
<keyword id="KW-0372">Hormone</keyword>
<keyword id="KW-1185">Reference proteome</keyword>
<keyword id="KW-0964">Secreted</keyword>
<keyword id="KW-0732">Signal</keyword>
<organism>
    <name type="scientific">Bombyx mori</name>
    <name type="common">Silk moth</name>
    <dbReference type="NCBI Taxonomy" id="7091"/>
    <lineage>
        <taxon>Eukaryota</taxon>
        <taxon>Metazoa</taxon>
        <taxon>Ecdysozoa</taxon>
        <taxon>Arthropoda</taxon>
        <taxon>Hexapoda</taxon>
        <taxon>Insecta</taxon>
        <taxon>Pterygota</taxon>
        <taxon>Neoptera</taxon>
        <taxon>Endopterygota</taxon>
        <taxon>Lepidoptera</taxon>
        <taxon>Glossata</taxon>
        <taxon>Ditrysia</taxon>
        <taxon>Bombycoidea</taxon>
        <taxon>Bombycidae</taxon>
        <taxon>Bombycinae</taxon>
        <taxon>Bombyx</taxon>
    </lineage>
</organism>
<reference evidence="7" key="1">
    <citation type="journal article" date="2005" name="Proc. Natl. Acad. Sci. U.S.A.">
        <title>Bursicon, the insect cuticle-hardening hormone, is a heterodimeric cystine knot protein that activates G protein-coupled receptor LGR2.</title>
        <authorList>
            <person name="Luo C.-W."/>
            <person name="Dewey E.M."/>
            <person name="Sudo S."/>
            <person name="Ewer J."/>
            <person name="Hsu S.Y."/>
            <person name="Honegger H.-W."/>
            <person name="Hsueh A.J.W."/>
        </authorList>
    </citation>
    <scope>NUCLEOTIDE SEQUENCE [MRNA]</scope>
</reference>
<reference evidence="6" key="2">
    <citation type="journal article" date="2004" name="DNA Res.">
        <title>The genome sequence of silkworm, Bombyx mori.</title>
        <authorList>
            <person name="Mita K."/>
            <person name="Kasahara M."/>
            <person name="Sasaki S."/>
            <person name="Nagayasu Y."/>
            <person name="Yamada T."/>
            <person name="Kanamori H."/>
            <person name="Namiki N."/>
            <person name="Kitagawa M."/>
            <person name="Yamashita H."/>
            <person name="Yasukochi Y."/>
            <person name="Kadono-Okuda K."/>
            <person name="Yamamoto K."/>
            <person name="Ajimura M."/>
            <person name="Ravikumar G."/>
            <person name="Shimomura M."/>
            <person name="Nagamura Y."/>
            <person name="Shin-I T."/>
            <person name="Abe H."/>
            <person name="Shimada T."/>
            <person name="Morishita S."/>
            <person name="Sasaki T."/>
        </authorList>
    </citation>
    <scope>NUCLEOTIDE SEQUENCE [LARGE SCALE GENOMIC DNA]</scope>
    <source>
        <strain evidence="5">p50T</strain>
    </source>
</reference>
<reference evidence="6 8" key="3">
    <citation type="journal article" date="2005" name="FEBS Lett.">
        <title>Drosophila molting neurohormone bursicon is a heterodimer and the natural agonist of the orphan receptor DLGR2.</title>
        <authorList>
            <person name="Mendive F.M."/>
            <person name="Van Loy T."/>
            <person name="Claeysen S."/>
            <person name="Poels J."/>
            <person name="Williamson M."/>
            <person name="Hauser F."/>
            <person name="Grimmelikhuijzen C.J.P."/>
            <person name="Vassart G."/>
            <person name="Vanden Broeck J.J.M."/>
        </authorList>
    </citation>
    <scope>IDENTIFICATION</scope>
</reference>
<dbReference type="EMBL" id="AY823260">
    <property type="protein sequence ID" value="AAX18445.1"/>
    <property type="molecule type" value="mRNA"/>
</dbReference>
<dbReference type="EMBL" id="BAAB01029150">
    <property type="status" value="NOT_ANNOTATED_CDS"/>
    <property type="molecule type" value="Genomic_DNA"/>
</dbReference>
<dbReference type="EMBL" id="BN000690">
    <property type="protein sequence ID" value="CAH89261.1"/>
    <property type="molecule type" value="mRNA"/>
</dbReference>
<dbReference type="RefSeq" id="NP_001037289.1">
    <property type="nucleotide sequence ID" value="NM_001043824.1"/>
</dbReference>
<dbReference type="SMR" id="Q566B2"/>
<dbReference type="FunCoup" id="Q566B2">
    <property type="interactions" value="1"/>
</dbReference>
<dbReference type="STRING" id="7091.Q566B2"/>
<dbReference type="PaxDb" id="7091-BGIBMGA011086-TA"/>
<dbReference type="EnsemblMetazoa" id="NM_001043824.1">
    <property type="protein sequence ID" value="NP_001037289.1"/>
    <property type="gene ID" value="GeneID_692730"/>
</dbReference>
<dbReference type="GeneID" id="692730"/>
<dbReference type="KEGG" id="bmor:692730"/>
<dbReference type="CTD" id="34845"/>
<dbReference type="eggNOG" id="ENOG502S111">
    <property type="taxonomic scope" value="Eukaryota"/>
</dbReference>
<dbReference type="HOGENOM" id="CLU_145016_0_0_1"/>
<dbReference type="InParanoid" id="Q566B2"/>
<dbReference type="OMA" id="ECKCYKC"/>
<dbReference type="OrthoDB" id="146573at7088"/>
<dbReference type="Proteomes" id="UP000005204">
    <property type="component" value="Unassembled WGS sequence"/>
</dbReference>
<dbReference type="GO" id="GO:0031395">
    <property type="term" value="C:bursicon neuropeptide hormone complex"/>
    <property type="evidence" value="ECO:0007669"/>
    <property type="project" value="InterPro"/>
</dbReference>
<dbReference type="GO" id="GO:0001664">
    <property type="term" value="F:G protein-coupled receptor binding"/>
    <property type="evidence" value="ECO:0007669"/>
    <property type="project" value="InterPro"/>
</dbReference>
<dbReference type="GO" id="GO:0005184">
    <property type="term" value="F:neuropeptide hormone activity"/>
    <property type="evidence" value="ECO:0007669"/>
    <property type="project" value="InterPro"/>
</dbReference>
<dbReference type="GO" id="GO:0007186">
    <property type="term" value="P:G protein-coupled receptor signaling pathway"/>
    <property type="evidence" value="ECO:0007669"/>
    <property type="project" value="TreeGrafter"/>
</dbReference>
<dbReference type="Gene3D" id="2.10.90.10">
    <property type="entry name" value="Cystine-knot cytokines"/>
    <property type="match status" value="1"/>
</dbReference>
<dbReference type="InterPro" id="IPR034441">
    <property type="entry name" value="Bursicon_suB"/>
</dbReference>
<dbReference type="InterPro" id="IPR029034">
    <property type="entry name" value="Cystine-knot_cytokine"/>
</dbReference>
<dbReference type="PANTHER" id="PTHR41151">
    <property type="entry name" value="PARTNER OF BURSICON"/>
    <property type="match status" value="1"/>
</dbReference>
<dbReference type="PANTHER" id="PTHR41151:SF1">
    <property type="entry name" value="PARTNER OF BURSICON"/>
    <property type="match status" value="1"/>
</dbReference>
<proteinExistence type="evidence at transcript level"/>
<gene>
    <name evidence="3" type="primary">pburs</name>
</gene>
<evidence type="ECO:0000250" key="1"/>
<evidence type="ECO:0000250" key="2">
    <source>
        <dbReference type="UniProtKB" id="P04275"/>
    </source>
</evidence>
<evidence type="ECO:0000250" key="3">
    <source>
        <dbReference type="UniProtKB" id="Q9VJS7"/>
    </source>
</evidence>
<evidence type="ECO:0000255" key="4"/>
<evidence type="ECO:0000269" key="5">
    <source>
    </source>
</evidence>
<evidence type="ECO:0000305" key="6"/>
<evidence type="ECO:0000312" key="7">
    <source>
        <dbReference type="EMBL" id="AAX18445.1"/>
    </source>
</evidence>
<evidence type="ECO:0000312" key="8">
    <source>
        <dbReference type="EMBL" id="CAH89261.1"/>
    </source>
</evidence>